<sequence>MSTFKNEMNGNNLLHVAVLAFPFGTHAAPLLSLVKKIATEAPKVTFSFFCTTTTNDTLFSRSNEFLPNIKYYNVHDGLPKGYVSSGNPREPIFLFIKAMQENFKHVIDEAVAETGKNITCLVTDAFFWFGADLAEEMHAKWVPLWTAGPHSLLTHVYTDLIREKTGSKEVHDVKSIDVLPGFPELKASDLPEGVIKDIDVPFATMLHKMGLELPRANAVAINSFATIHPLIENELNSKFKLLLNVGPFNLTTPQRKVSDEHGCLEWLDQHENSSVVYISFGSVVTPPPHELTALAESLEECGFPFIWSFRGDPKEKLPKGFLERTKTKGKIVAWAPQVEILKHSSVGVFLTHSGWNSVLECIVGGVPMISRPFFGDQGLNTILTESVLEIGVGVDNGVLTKESIKKALELTMSSEKGGIMRQKIVKLKESAFKAVEQNGTSAMDFTTLIQIVTS</sequence>
<accession>A6XNC6</accession>
<dbReference type="EC" id="2.4.1.-"/>
<dbReference type="EMBL" id="DQ875464">
    <property type="protein sequence ID" value="ABI94025.1"/>
    <property type="molecule type" value="mRNA"/>
</dbReference>
<dbReference type="PDB" id="3HBF">
    <property type="method" value="X-ray"/>
    <property type="resolution" value="2.10 A"/>
    <property type="chains" value="A=1-454"/>
</dbReference>
<dbReference type="PDB" id="3HBJ">
    <property type="method" value="X-ray"/>
    <property type="resolution" value="2.10 A"/>
    <property type="chains" value="A=1-454"/>
</dbReference>
<dbReference type="PDBsum" id="3HBF"/>
<dbReference type="PDBsum" id="3HBJ"/>
<dbReference type="SMR" id="A6XNC6"/>
<dbReference type="CAZy" id="GT1">
    <property type="family name" value="Glycosyltransferase Family 1"/>
</dbReference>
<dbReference type="PaxDb" id="3880-AES92360"/>
<dbReference type="EnsemblPlants" id="rna27634">
    <property type="protein sequence ID" value="RHN64777.1"/>
    <property type="gene ID" value="gene27634"/>
</dbReference>
<dbReference type="GeneID" id="11445564"/>
<dbReference type="Gramene" id="rna27634">
    <property type="protein sequence ID" value="RHN64777.1"/>
    <property type="gene ID" value="gene27634"/>
</dbReference>
<dbReference type="KEGG" id="mtr:11445564"/>
<dbReference type="eggNOG" id="KOG1192">
    <property type="taxonomic scope" value="Eukaryota"/>
</dbReference>
<dbReference type="HOGENOM" id="CLU_001724_0_2_1"/>
<dbReference type="OMA" id="IKPFNVR"/>
<dbReference type="OrthoDB" id="5835829at2759"/>
<dbReference type="SABIO-RK" id="A6XNC6"/>
<dbReference type="UniPathway" id="UPA00154"/>
<dbReference type="EvolutionaryTrace" id="A6XNC6"/>
<dbReference type="GO" id="GO:0008194">
    <property type="term" value="F:UDP-glycosyltransferase activity"/>
    <property type="evidence" value="ECO:0007669"/>
    <property type="project" value="InterPro"/>
</dbReference>
<dbReference type="GO" id="GO:0009813">
    <property type="term" value="P:flavonoid biosynthetic process"/>
    <property type="evidence" value="ECO:0007669"/>
    <property type="project" value="UniProtKB-UniPathway"/>
</dbReference>
<dbReference type="GO" id="GO:0009698">
    <property type="term" value="P:phenylpropanoid metabolic process"/>
    <property type="evidence" value="ECO:0007669"/>
    <property type="project" value="UniProtKB-KW"/>
</dbReference>
<dbReference type="CDD" id="cd03784">
    <property type="entry name" value="GT1_Gtf-like"/>
    <property type="match status" value="1"/>
</dbReference>
<dbReference type="FunFam" id="3.40.50.2000:FF:000091">
    <property type="entry name" value="Glycosyltransferase"/>
    <property type="match status" value="1"/>
</dbReference>
<dbReference type="FunFam" id="3.40.50.2000:FF:000129">
    <property type="entry name" value="Glycosyltransferase"/>
    <property type="match status" value="1"/>
</dbReference>
<dbReference type="Gene3D" id="3.40.50.2000">
    <property type="entry name" value="Glycogen Phosphorylase B"/>
    <property type="match status" value="2"/>
</dbReference>
<dbReference type="InterPro" id="IPR002213">
    <property type="entry name" value="UDP_glucos_trans"/>
</dbReference>
<dbReference type="PANTHER" id="PTHR11926">
    <property type="entry name" value="GLUCOSYL/GLUCURONOSYL TRANSFERASES"/>
    <property type="match status" value="1"/>
</dbReference>
<dbReference type="PANTHER" id="PTHR11926:SF774">
    <property type="entry name" value="UDP-GLYCOSYLTRANSFERASE 85A1-RELATED"/>
    <property type="match status" value="1"/>
</dbReference>
<dbReference type="Pfam" id="PF00201">
    <property type="entry name" value="UDPGT"/>
    <property type="match status" value="1"/>
</dbReference>
<dbReference type="SUPFAM" id="SSF53756">
    <property type="entry name" value="UDP-Glycosyltransferase/glycogen phosphorylase"/>
    <property type="match status" value="1"/>
</dbReference>
<feature type="chain" id="PRO_0000328919" description="Flavonoid 3-O-glucosyltransferase">
    <location>
        <begin position="1"/>
        <end position="454"/>
    </location>
</feature>
<feature type="active site" description="Proton acceptor" evidence="1">
    <location>
        <position position="26"/>
    </location>
</feature>
<feature type="active site" description="Charge relay" evidence="1">
    <location>
        <position position="124"/>
    </location>
</feature>
<feature type="binding site" evidence="3 5 6">
    <location>
        <position position="25"/>
    </location>
    <ligand>
        <name>UDP</name>
        <dbReference type="ChEBI" id="CHEBI:58223"/>
    </ligand>
</feature>
<feature type="binding site" evidence="3 5">
    <location>
        <position position="89"/>
    </location>
    <ligand>
        <name>myricetin</name>
        <dbReference type="ChEBI" id="CHEBI:58395"/>
    </ligand>
</feature>
<feature type="binding site" evidence="3 5">
    <location>
        <position position="155"/>
    </location>
    <ligand>
        <name>myricetin</name>
        <dbReference type="ChEBI" id="CHEBI:58395"/>
    </ligand>
</feature>
<feature type="binding site" evidence="3 5">
    <location>
        <position position="192"/>
    </location>
    <ligand>
        <name>myricetin</name>
        <dbReference type="ChEBI" id="CHEBI:58395"/>
    </ligand>
</feature>
<feature type="binding site" evidence="3 5">
    <location>
        <position position="202"/>
    </location>
    <ligand>
        <name>myricetin</name>
        <dbReference type="ChEBI" id="CHEBI:58395"/>
    </ligand>
</feature>
<feature type="binding site" evidence="3 5 6">
    <location>
        <position position="282"/>
    </location>
    <ligand>
        <name>UDP</name>
        <dbReference type="ChEBI" id="CHEBI:58223"/>
    </ligand>
</feature>
<feature type="binding site" evidence="3 5 6">
    <location>
        <position position="308"/>
    </location>
    <ligand>
        <name>UDP</name>
        <dbReference type="ChEBI" id="CHEBI:58223"/>
    </ligand>
</feature>
<feature type="binding site" evidence="3 5 6">
    <location>
        <position position="334"/>
    </location>
    <ligand>
        <name>UDP</name>
        <dbReference type="ChEBI" id="CHEBI:58223"/>
    </ligand>
</feature>
<feature type="binding site" evidence="3 5 6">
    <location>
        <position position="335"/>
    </location>
    <ligand>
        <name>UDP</name>
        <dbReference type="ChEBI" id="CHEBI:58223"/>
    </ligand>
</feature>
<feature type="binding site" evidence="1">
    <location>
        <position position="335"/>
    </location>
    <ligand>
        <name>UDP-alpha-D-glucose</name>
        <dbReference type="ChEBI" id="CHEBI:58885"/>
    </ligand>
</feature>
<feature type="binding site" evidence="1">
    <location>
        <position position="337"/>
    </location>
    <ligand>
        <name>UDP-alpha-D-glucose</name>
        <dbReference type="ChEBI" id="CHEBI:58885"/>
    </ligand>
</feature>
<feature type="binding site" evidence="3 5 6">
    <location>
        <position position="352"/>
    </location>
    <ligand>
        <name>UDP</name>
        <dbReference type="ChEBI" id="CHEBI:58223"/>
    </ligand>
</feature>
<feature type="binding site" evidence="1">
    <location>
        <position position="352"/>
    </location>
    <ligand>
        <name>UDP-alpha-D-glucose</name>
        <dbReference type="ChEBI" id="CHEBI:58885"/>
    </ligand>
</feature>
<feature type="binding site" evidence="1">
    <location>
        <position position="355"/>
    </location>
    <ligand>
        <name>UDP-alpha-D-glucose</name>
        <dbReference type="ChEBI" id="CHEBI:58885"/>
    </ligand>
</feature>
<feature type="binding site" evidence="3 5 6">
    <location>
        <position position="356"/>
    </location>
    <ligand>
        <name>UDP</name>
        <dbReference type="ChEBI" id="CHEBI:58223"/>
    </ligand>
</feature>
<feature type="binding site" evidence="1">
    <location>
        <position position="356"/>
    </location>
    <ligand>
        <name>UDP-alpha-D-glucose</name>
        <dbReference type="ChEBI" id="CHEBI:58885"/>
    </ligand>
</feature>
<feature type="binding site" evidence="3 5 6">
    <location>
        <position position="357"/>
    </location>
    <ligand>
        <name>UDP</name>
        <dbReference type="ChEBI" id="CHEBI:58223"/>
    </ligand>
</feature>
<feature type="binding site" evidence="1">
    <location>
        <position position="357"/>
    </location>
    <ligand>
        <name>UDP-alpha-D-glucose</name>
        <dbReference type="ChEBI" id="CHEBI:58885"/>
    </ligand>
</feature>
<feature type="binding site" evidence="3 5 6">
    <location>
        <position position="360"/>
    </location>
    <ligand>
        <name>UDP</name>
        <dbReference type="ChEBI" id="CHEBI:58223"/>
    </ligand>
</feature>
<feature type="binding site" evidence="1">
    <location>
        <position position="360"/>
    </location>
    <ligand>
        <name>UDP-alpha-D-glucose</name>
        <dbReference type="ChEBI" id="CHEBI:58885"/>
    </ligand>
</feature>
<feature type="binding site" evidence="3 5">
    <location>
        <position position="375"/>
    </location>
    <ligand>
        <name>myricetin</name>
        <dbReference type="ChEBI" id="CHEBI:58395"/>
    </ligand>
</feature>
<feature type="binding site" evidence="1">
    <location>
        <position position="376"/>
    </location>
    <ligand>
        <name>UDP-alpha-D-glucose</name>
        <dbReference type="ChEBI" id="CHEBI:58885"/>
    </ligand>
</feature>
<feature type="binding site" evidence="1">
    <location>
        <position position="377"/>
    </location>
    <ligand>
        <name>UDP-alpha-D-glucose</name>
        <dbReference type="ChEBI" id="CHEBI:58885"/>
    </ligand>
</feature>
<feature type="strand" evidence="7">
    <location>
        <begin position="15"/>
        <end position="19"/>
    </location>
</feature>
<feature type="strand" evidence="7">
    <location>
        <begin position="23"/>
        <end position="26"/>
    </location>
</feature>
<feature type="helix" evidence="7">
    <location>
        <begin position="27"/>
        <end position="40"/>
    </location>
</feature>
<feature type="strand" evidence="7">
    <location>
        <begin position="44"/>
        <end position="50"/>
    </location>
</feature>
<feature type="helix" evidence="7">
    <location>
        <begin position="52"/>
        <end position="57"/>
    </location>
</feature>
<feature type="strand" evidence="7">
    <location>
        <begin position="60"/>
        <end position="63"/>
    </location>
</feature>
<feature type="strand" evidence="7">
    <location>
        <begin position="69"/>
        <end position="73"/>
    </location>
</feature>
<feature type="helix" evidence="7">
    <location>
        <begin position="90"/>
        <end position="114"/>
    </location>
</feature>
<feature type="strand" evidence="7">
    <location>
        <begin position="120"/>
        <end position="124"/>
    </location>
</feature>
<feature type="helix" evidence="7">
    <location>
        <begin position="130"/>
        <end position="136"/>
    </location>
</feature>
<feature type="strand" evidence="7">
    <location>
        <begin position="140"/>
        <end position="145"/>
    </location>
</feature>
<feature type="helix" evidence="7">
    <location>
        <begin position="149"/>
        <end position="156"/>
    </location>
</feature>
<feature type="helix" evidence="7">
    <location>
        <begin position="158"/>
        <end position="163"/>
    </location>
</feature>
<feature type="helix" evidence="7">
    <location>
        <begin position="167"/>
        <end position="170"/>
    </location>
</feature>
<feature type="helix" evidence="7">
    <location>
        <begin position="187"/>
        <end position="189"/>
    </location>
</feature>
<feature type="strand" evidence="7">
    <location>
        <begin position="194"/>
        <end position="196"/>
    </location>
</feature>
<feature type="helix" evidence="7">
    <location>
        <begin position="201"/>
        <end position="212"/>
    </location>
</feature>
<feature type="helix" evidence="7">
    <location>
        <begin position="213"/>
        <end position="215"/>
    </location>
</feature>
<feature type="strand" evidence="7">
    <location>
        <begin position="219"/>
        <end position="223"/>
    </location>
</feature>
<feature type="helix" evidence="7">
    <location>
        <begin position="225"/>
        <end position="227"/>
    </location>
</feature>
<feature type="helix" evidence="7">
    <location>
        <begin position="229"/>
        <end position="236"/>
    </location>
</feature>
<feature type="strand" evidence="7">
    <location>
        <begin position="242"/>
        <end position="244"/>
    </location>
</feature>
<feature type="helix" evidence="7">
    <location>
        <begin position="248"/>
        <end position="251"/>
    </location>
</feature>
<feature type="helix" evidence="7">
    <location>
        <begin position="263"/>
        <end position="268"/>
    </location>
</feature>
<feature type="strand" evidence="7">
    <location>
        <begin position="275"/>
        <end position="279"/>
    </location>
</feature>
<feature type="turn" evidence="8">
    <location>
        <begin position="281"/>
        <end position="283"/>
    </location>
</feature>
<feature type="helix" evidence="7">
    <location>
        <begin position="288"/>
        <end position="301"/>
    </location>
</feature>
<feature type="strand" evidence="7">
    <location>
        <begin position="305"/>
        <end position="308"/>
    </location>
</feature>
<feature type="helix" evidence="7">
    <location>
        <begin position="313"/>
        <end position="316"/>
    </location>
</feature>
<feature type="helix" evidence="7">
    <location>
        <begin position="321"/>
        <end position="324"/>
    </location>
</feature>
<feature type="turn" evidence="7">
    <location>
        <begin position="325"/>
        <end position="328"/>
    </location>
</feature>
<feature type="strand" evidence="7">
    <location>
        <begin position="329"/>
        <end position="334"/>
    </location>
</feature>
<feature type="helix" evidence="7">
    <location>
        <begin position="337"/>
        <end position="342"/>
    </location>
</feature>
<feature type="strand" evidence="7">
    <location>
        <begin position="346"/>
        <end position="351"/>
    </location>
</feature>
<feature type="helix" evidence="7">
    <location>
        <begin position="355"/>
        <end position="364"/>
    </location>
</feature>
<feature type="strand" evidence="7">
    <location>
        <begin position="368"/>
        <end position="370"/>
    </location>
</feature>
<feature type="helix" evidence="7">
    <location>
        <begin position="377"/>
        <end position="385"/>
    </location>
</feature>
<feature type="strand" evidence="7">
    <location>
        <begin position="390"/>
        <end position="393"/>
    </location>
</feature>
<feature type="helix" evidence="7">
    <location>
        <begin position="395"/>
        <end position="397"/>
    </location>
</feature>
<feature type="helix" evidence="7">
    <location>
        <begin position="401"/>
        <end position="412"/>
    </location>
</feature>
<feature type="helix" evidence="7">
    <location>
        <begin position="415"/>
        <end position="434"/>
    </location>
</feature>
<feature type="helix" evidence="7">
    <location>
        <begin position="440"/>
        <end position="452"/>
    </location>
</feature>
<name>UGFGT_MEDTR</name>
<protein>
    <recommendedName>
        <fullName>Flavonoid 3-O-glucosyltransferase</fullName>
        <ecNumber>2.4.1.-</ecNumber>
    </recommendedName>
    <alternativeName>
        <fullName>UDP glucose:flavonoid 3-O-glucosyltransferase</fullName>
    </alternativeName>
    <alternativeName>
        <fullName>UDP-glycosyltransferase 78G1</fullName>
    </alternativeName>
</protein>
<comment type="function">
    <text>Catalyzes the glycosylation of flavonoids at the 3-O-position. Glycosylates the 7-O-position if the 3-O-position is not available. Also able to perform 3-O-glycosylation of anthocyanidins.</text>
</comment>
<comment type="biophysicochemical properties">
    <kinetics>
        <KM evidence="2">89.8 uM for kaempferol</KM>
        <KM evidence="2">28.7 uM for quercitin</KM>
        <KM evidence="2">52 uM for pelargonidin</KM>
        <KM evidence="2">71.8 uM for cyanidin</KM>
        <KM evidence="2">1.5 uM for apigenin</KM>
        <KM evidence="2">36.7 uM for genistein</KM>
        <KM evidence="2">1.6 uM for daidzein</KM>
        <KM evidence="2">11.7 uM for biochanin A</KM>
        <KM evidence="2">1.5 uM for formononetin</KM>
        <Vmax evidence="2">1.583 umol/min/ug enzyme toward kaempferol</Vmax>
        <Vmax evidence="2">0.8557 umol/min/ug enzyme toward quercitin</Vmax>
        <Vmax evidence="2">0.2025 umol/min/ug enzyme toward pelargonidin</Vmax>
        <Vmax evidence="2">0.1698 umol/min/ug enzyme toward cyanidin</Vmax>
        <Vmax evidence="2">0.0688 umol/min/ug enzyme toward apigenin</Vmax>
        <Vmax evidence="2">1.205 umol/min/ug enzyme toward genistein</Vmax>
        <Vmax evidence="2">0.053 umol/min/ug enzyme toward daidzein</Vmax>
        <Vmax evidence="2">0.3666 umol/min/ug enzyme toward biochanin A</Vmax>
        <Vmax evidence="2">0.0879 umol/min/ug enzyme toward formononetin</Vmax>
    </kinetics>
</comment>
<comment type="pathway">
    <text>Secondary metabolite biosynthesis; flavonoid biosynthesis.</text>
</comment>
<comment type="tissue specificity">
    <text evidence="2">Highly expressed in flower buds, flowers and pods. Lower expression in leaves, petioles and stems.</text>
</comment>
<comment type="developmental stage">
    <text evidence="2">Expressed in developing seeds, with a maximum at 16 days after pollination. Not expressed in nodules.</text>
</comment>
<comment type="induction">
    <text evidence="2">Strongly down-regulated by wounding or by methyl jasmonate.</text>
</comment>
<comment type="miscellaneous">
    <text>For the flavonols kaempferol and quercetin, a significant activity was also observed with UDP-galactose as sugar donor. The reverse reaction (deglycosylation) is observed, but not with formononetin 7-O-glucoside.</text>
</comment>
<comment type="similarity">
    <text evidence="4">Belongs to the UDP-glycosyltransferase family.</text>
</comment>
<keyword id="KW-0002">3D-structure</keyword>
<keyword id="KW-0328">Glycosyltransferase</keyword>
<keyword id="KW-0587">Phenylpropanoid metabolism</keyword>
<keyword id="KW-0808">Transferase</keyword>
<gene>
    <name type="primary">UGT78G1</name>
    <name type="synonym">GT83F</name>
</gene>
<organism>
    <name type="scientific">Medicago truncatula</name>
    <name type="common">Barrel medic</name>
    <name type="synonym">Medicago tribuloides</name>
    <dbReference type="NCBI Taxonomy" id="3880"/>
    <lineage>
        <taxon>Eukaryota</taxon>
        <taxon>Viridiplantae</taxon>
        <taxon>Streptophyta</taxon>
        <taxon>Embryophyta</taxon>
        <taxon>Tracheophyta</taxon>
        <taxon>Spermatophyta</taxon>
        <taxon>Magnoliopsida</taxon>
        <taxon>eudicotyledons</taxon>
        <taxon>Gunneridae</taxon>
        <taxon>Pentapetalae</taxon>
        <taxon>rosids</taxon>
        <taxon>fabids</taxon>
        <taxon>Fabales</taxon>
        <taxon>Fabaceae</taxon>
        <taxon>Papilionoideae</taxon>
        <taxon>50 kb inversion clade</taxon>
        <taxon>NPAAA clade</taxon>
        <taxon>Hologalegina</taxon>
        <taxon>IRL clade</taxon>
        <taxon>Trifolieae</taxon>
        <taxon>Medicago</taxon>
    </lineage>
</organism>
<reference key="1">
    <citation type="journal article" date="2007" name="Plant Mol. Biol.">
        <title>A functional genomics approach to (iso)flavonoid glycosylation in the model legume Medicago truncatula.</title>
        <authorList>
            <person name="Modolo L.V."/>
            <person name="Blount J.W."/>
            <person name="Achnine L."/>
            <person name="Naoumkina M.A."/>
            <person name="Wang X."/>
            <person name="Dixon R.A."/>
        </authorList>
    </citation>
    <scope>NUCLEOTIDE SEQUENCE [MRNA]</scope>
    <scope>TISSUE SPECIFICITY</scope>
    <scope>DEVELOPMENTAL STAGE</scope>
    <scope>INDUCTION</scope>
    <scope>BIOPHYSICOCHEMICAL PROPERTIES</scope>
</reference>
<reference key="2">
    <citation type="journal article" date="2009" name="J. Mol. Biol.">
        <title>Crystal structures of glycosyltransferase UGT78G1 reveal the molecular basis for glycosylation and deglycosylation of (iso)flavonoids.</title>
        <authorList>
            <person name="Modolo L.V."/>
            <person name="Li L."/>
            <person name="Pan H."/>
            <person name="Blount J.W."/>
            <person name="Dixon R.A."/>
            <person name="Wang X."/>
        </authorList>
    </citation>
    <scope>X-RAY CRYSTALLOGRAPHY (2.10 ANGSTROMS) IN COMPLEX WITH MYRICETIN AND UDP</scope>
</reference>
<proteinExistence type="evidence at protein level"/>
<evidence type="ECO:0000250" key="1">
    <source>
        <dbReference type="UniProtKB" id="A0A0A1HA03"/>
    </source>
</evidence>
<evidence type="ECO:0000269" key="2">
    <source>
    </source>
</evidence>
<evidence type="ECO:0000269" key="3">
    <source>
    </source>
</evidence>
<evidence type="ECO:0000305" key="4"/>
<evidence type="ECO:0007744" key="5">
    <source>
        <dbReference type="PDB" id="3HBF"/>
    </source>
</evidence>
<evidence type="ECO:0007744" key="6">
    <source>
        <dbReference type="PDB" id="3HBJ"/>
    </source>
</evidence>
<evidence type="ECO:0007829" key="7">
    <source>
        <dbReference type="PDB" id="3HBF"/>
    </source>
</evidence>
<evidence type="ECO:0007829" key="8">
    <source>
        <dbReference type="PDB" id="3HBJ"/>
    </source>
</evidence>